<keyword id="KW-0997">Cell inner membrane</keyword>
<keyword id="KW-1003">Cell membrane</keyword>
<keyword id="KW-0472">Membrane</keyword>
<keyword id="KW-1185">Reference proteome</keyword>
<protein>
    <recommendedName>
        <fullName evidence="1">Protein Syd</fullName>
    </recommendedName>
</protein>
<reference key="1">
    <citation type="journal article" date="2008" name="J. Bacteriol.">
        <title>The pangenome structure of Escherichia coli: comparative genomic analysis of E. coli commensal and pathogenic isolates.</title>
        <authorList>
            <person name="Rasko D.A."/>
            <person name="Rosovitz M.J."/>
            <person name="Myers G.S.A."/>
            <person name="Mongodin E.F."/>
            <person name="Fricke W.F."/>
            <person name="Gajer P."/>
            <person name="Crabtree J."/>
            <person name="Sebaihia M."/>
            <person name="Thomson N.R."/>
            <person name="Chaudhuri R."/>
            <person name="Henderson I.R."/>
            <person name="Sperandio V."/>
            <person name="Ravel J."/>
        </authorList>
    </citation>
    <scope>NUCLEOTIDE SEQUENCE [LARGE SCALE GENOMIC DNA]</scope>
    <source>
        <strain>E24377A / ETEC</strain>
    </source>
</reference>
<name>SYDP_ECO24</name>
<evidence type="ECO:0000255" key="1">
    <source>
        <dbReference type="HAMAP-Rule" id="MF_01104"/>
    </source>
</evidence>
<organism>
    <name type="scientific">Escherichia coli O139:H28 (strain E24377A / ETEC)</name>
    <dbReference type="NCBI Taxonomy" id="331111"/>
    <lineage>
        <taxon>Bacteria</taxon>
        <taxon>Pseudomonadati</taxon>
        <taxon>Pseudomonadota</taxon>
        <taxon>Gammaproteobacteria</taxon>
        <taxon>Enterobacterales</taxon>
        <taxon>Enterobacteriaceae</taxon>
        <taxon>Escherichia</taxon>
    </lineage>
</organism>
<proteinExistence type="inferred from homology"/>
<gene>
    <name evidence="1" type="primary">syd</name>
    <name type="ordered locus">EcE24377A_3097</name>
</gene>
<sequence>MDDLTAQALKDFTARYCDAWHEEHKSWPLSEELYGVPSPCIISTTEDAVYWQPQPFTGEQNVNAVERAFDIVIQPTIHTFYTTQFAGDMHAQFGDIKLTLLQTWSEDDFRRVQENLIGHLVTQKRLKLPPTLFIATLEEELEVISVCNLSGEVCKETLGTRKRTHLASNLAEFLNQLKPLL</sequence>
<comment type="function">
    <text evidence="1">Interacts with the SecY protein in vivo. May bind preferentially to an uncomplexed state of SecY, thus functioning either as a chelating agent for excess SecY in the cell or as a regulatory factor that negatively controls the translocase function.</text>
</comment>
<comment type="subcellular location">
    <subcellularLocation>
        <location evidence="1">Cell inner membrane</location>
        <topology evidence="1">Peripheral membrane protein</topology>
        <orientation evidence="1">Cytoplasmic side</orientation>
    </subcellularLocation>
    <text evidence="1">Loosely associated with the cytoplasmic side of the inner membrane, probably via SecY.</text>
</comment>
<comment type="similarity">
    <text evidence="1">Belongs to the Syd family.</text>
</comment>
<dbReference type="EMBL" id="CP000800">
    <property type="protein sequence ID" value="ABV18178.1"/>
    <property type="molecule type" value="Genomic_DNA"/>
</dbReference>
<dbReference type="RefSeq" id="WP_000342431.1">
    <property type="nucleotide sequence ID" value="NC_009801.1"/>
</dbReference>
<dbReference type="SMR" id="A7ZQN6"/>
<dbReference type="GeneID" id="93779205"/>
<dbReference type="KEGG" id="ecw:EcE24377A_3097"/>
<dbReference type="HOGENOM" id="CLU_121866_0_0_6"/>
<dbReference type="Proteomes" id="UP000001122">
    <property type="component" value="Chromosome"/>
</dbReference>
<dbReference type="GO" id="GO:0009898">
    <property type="term" value="C:cytoplasmic side of plasma membrane"/>
    <property type="evidence" value="ECO:0007669"/>
    <property type="project" value="InterPro"/>
</dbReference>
<dbReference type="CDD" id="cd16323">
    <property type="entry name" value="Syd"/>
    <property type="match status" value="1"/>
</dbReference>
<dbReference type="FunFam" id="3.40.1580.20:FF:000001">
    <property type="entry name" value="Protein Syd"/>
    <property type="match status" value="1"/>
</dbReference>
<dbReference type="Gene3D" id="3.40.1580.20">
    <property type="entry name" value="Syd protein"/>
    <property type="match status" value="1"/>
</dbReference>
<dbReference type="HAMAP" id="MF_01104">
    <property type="entry name" value="Syd"/>
    <property type="match status" value="1"/>
</dbReference>
<dbReference type="InterPro" id="IPR009948">
    <property type="entry name" value="Syd"/>
</dbReference>
<dbReference type="InterPro" id="IPR038228">
    <property type="entry name" value="Syd_sf"/>
</dbReference>
<dbReference type="NCBIfam" id="NF003439">
    <property type="entry name" value="PRK04968.1"/>
    <property type="match status" value="1"/>
</dbReference>
<dbReference type="Pfam" id="PF07348">
    <property type="entry name" value="Syd"/>
    <property type="match status" value="1"/>
</dbReference>
<feature type="chain" id="PRO_1000065038" description="Protein Syd">
    <location>
        <begin position="1"/>
        <end position="181"/>
    </location>
</feature>
<accession>A7ZQN6</accession>